<protein>
    <recommendedName>
        <fullName evidence="1">3-dehydroquinate synthase</fullName>
        <shortName evidence="1">DHQS</shortName>
        <ecNumber evidence="1">4.2.3.4</ecNumber>
    </recommendedName>
</protein>
<comment type="function">
    <text evidence="1">Catalyzes the conversion of 3-deoxy-D-arabino-heptulosonate 7-phosphate (DAHP) to dehydroquinate (DHQ).</text>
</comment>
<comment type="catalytic activity">
    <reaction evidence="1">
        <text>7-phospho-2-dehydro-3-deoxy-D-arabino-heptonate = 3-dehydroquinate + phosphate</text>
        <dbReference type="Rhea" id="RHEA:21968"/>
        <dbReference type="ChEBI" id="CHEBI:32364"/>
        <dbReference type="ChEBI" id="CHEBI:43474"/>
        <dbReference type="ChEBI" id="CHEBI:58394"/>
        <dbReference type="EC" id="4.2.3.4"/>
    </reaction>
</comment>
<comment type="cofactor">
    <cofactor evidence="1">
        <name>Co(2+)</name>
        <dbReference type="ChEBI" id="CHEBI:48828"/>
    </cofactor>
    <cofactor evidence="1">
        <name>Zn(2+)</name>
        <dbReference type="ChEBI" id="CHEBI:29105"/>
    </cofactor>
    <text evidence="1">Binds 1 divalent metal cation per subunit. Can use either Co(2+) or Zn(2+).</text>
</comment>
<comment type="cofactor">
    <cofactor evidence="1">
        <name>NAD(+)</name>
        <dbReference type="ChEBI" id="CHEBI:57540"/>
    </cofactor>
</comment>
<comment type="pathway">
    <text evidence="1">Metabolic intermediate biosynthesis; chorismate biosynthesis; chorismate from D-erythrose 4-phosphate and phosphoenolpyruvate: step 2/7.</text>
</comment>
<comment type="subcellular location">
    <subcellularLocation>
        <location evidence="1">Cytoplasm</location>
    </subcellularLocation>
</comment>
<comment type="similarity">
    <text evidence="1">Belongs to the sugar phosphate cyclases superfamily. Dehydroquinate synthase family.</text>
</comment>
<proteinExistence type="inferred from homology"/>
<dbReference type="EC" id="4.2.3.4" evidence="1"/>
<dbReference type="EMBL" id="CP000377">
    <property type="protein sequence ID" value="ABF64165.1"/>
    <property type="molecule type" value="Genomic_DNA"/>
</dbReference>
<dbReference type="RefSeq" id="WP_011538768.1">
    <property type="nucleotide sequence ID" value="NC_008044.1"/>
</dbReference>
<dbReference type="SMR" id="Q1GGQ1"/>
<dbReference type="STRING" id="292414.TM1040_1432"/>
<dbReference type="KEGG" id="sit:TM1040_1432"/>
<dbReference type="eggNOG" id="COG0337">
    <property type="taxonomic scope" value="Bacteria"/>
</dbReference>
<dbReference type="HOGENOM" id="CLU_001201_0_2_5"/>
<dbReference type="OrthoDB" id="9806583at2"/>
<dbReference type="UniPathway" id="UPA00053">
    <property type="reaction ID" value="UER00085"/>
</dbReference>
<dbReference type="Proteomes" id="UP000000636">
    <property type="component" value="Chromosome"/>
</dbReference>
<dbReference type="GO" id="GO:0005737">
    <property type="term" value="C:cytoplasm"/>
    <property type="evidence" value="ECO:0007669"/>
    <property type="project" value="UniProtKB-SubCell"/>
</dbReference>
<dbReference type="GO" id="GO:0003856">
    <property type="term" value="F:3-dehydroquinate synthase activity"/>
    <property type="evidence" value="ECO:0007669"/>
    <property type="project" value="UniProtKB-UniRule"/>
</dbReference>
<dbReference type="GO" id="GO:0046872">
    <property type="term" value="F:metal ion binding"/>
    <property type="evidence" value="ECO:0007669"/>
    <property type="project" value="UniProtKB-KW"/>
</dbReference>
<dbReference type="GO" id="GO:0000166">
    <property type="term" value="F:nucleotide binding"/>
    <property type="evidence" value="ECO:0007669"/>
    <property type="project" value="UniProtKB-KW"/>
</dbReference>
<dbReference type="GO" id="GO:0008652">
    <property type="term" value="P:amino acid biosynthetic process"/>
    <property type="evidence" value="ECO:0007669"/>
    <property type="project" value="UniProtKB-KW"/>
</dbReference>
<dbReference type="GO" id="GO:0009073">
    <property type="term" value="P:aromatic amino acid family biosynthetic process"/>
    <property type="evidence" value="ECO:0007669"/>
    <property type="project" value="UniProtKB-KW"/>
</dbReference>
<dbReference type="GO" id="GO:0009423">
    <property type="term" value="P:chorismate biosynthetic process"/>
    <property type="evidence" value="ECO:0007669"/>
    <property type="project" value="UniProtKB-UniRule"/>
</dbReference>
<dbReference type="CDD" id="cd08195">
    <property type="entry name" value="DHQS"/>
    <property type="match status" value="1"/>
</dbReference>
<dbReference type="FunFam" id="3.40.50.1970:FF:000007">
    <property type="entry name" value="Pentafunctional AROM polypeptide"/>
    <property type="match status" value="1"/>
</dbReference>
<dbReference type="Gene3D" id="3.40.50.1970">
    <property type="match status" value="1"/>
</dbReference>
<dbReference type="Gene3D" id="1.20.1090.10">
    <property type="entry name" value="Dehydroquinate synthase-like - alpha domain"/>
    <property type="match status" value="1"/>
</dbReference>
<dbReference type="HAMAP" id="MF_00110">
    <property type="entry name" value="DHQ_synthase"/>
    <property type="match status" value="1"/>
</dbReference>
<dbReference type="InterPro" id="IPR050071">
    <property type="entry name" value="Dehydroquinate_synthase"/>
</dbReference>
<dbReference type="InterPro" id="IPR016037">
    <property type="entry name" value="DHQ_synth_AroB"/>
</dbReference>
<dbReference type="InterPro" id="IPR030963">
    <property type="entry name" value="DHQ_synth_fam"/>
</dbReference>
<dbReference type="InterPro" id="IPR030960">
    <property type="entry name" value="DHQS/DOIS_N"/>
</dbReference>
<dbReference type="InterPro" id="IPR056179">
    <property type="entry name" value="DHQS_C"/>
</dbReference>
<dbReference type="NCBIfam" id="TIGR01357">
    <property type="entry name" value="aroB"/>
    <property type="match status" value="1"/>
</dbReference>
<dbReference type="PANTHER" id="PTHR43622">
    <property type="entry name" value="3-DEHYDROQUINATE SYNTHASE"/>
    <property type="match status" value="1"/>
</dbReference>
<dbReference type="PANTHER" id="PTHR43622:SF7">
    <property type="entry name" value="3-DEHYDROQUINATE SYNTHASE, CHLOROPLASTIC"/>
    <property type="match status" value="1"/>
</dbReference>
<dbReference type="Pfam" id="PF01761">
    <property type="entry name" value="DHQ_synthase"/>
    <property type="match status" value="1"/>
</dbReference>
<dbReference type="Pfam" id="PF24621">
    <property type="entry name" value="DHQS_C"/>
    <property type="match status" value="1"/>
</dbReference>
<dbReference type="PIRSF" id="PIRSF001455">
    <property type="entry name" value="DHQ_synth"/>
    <property type="match status" value="1"/>
</dbReference>
<dbReference type="SUPFAM" id="SSF56796">
    <property type="entry name" value="Dehydroquinate synthase-like"/>
    <property type="match status" value="1"/>
</dbReference>
<accession>Q1GGQ1</accession>
<feature type="chain" id="PRO_1000094623" description="3-dehydroquinate synthase">
    <location>
        <begin position="1"/>
        <end position="373"/>
    </location>
</feature>
<feature type="binding site" evidence="1">
    <location>
        <begin position="107"/>
        <end position="111"/>
    </location>
    <ligand>
        <name>NAD(+)</name>
        <dbReference type="ChEBI" id="CHEBI:57540"/>
    </ligand>
</feature>
<feature type="binding site" evidence="1">
    <location>
        <begin position="131"/>
        <end position="132"/>
    </location>
    <ligand>
        <name>NAD(+)</name>
        <dbReference type="ChEBI" id="CHEBI:57540"/>
    </ligand>
</feature>
<feature type="binding site" evidence="1">
    <location>
        <position position="144"/>
    </location>
    <ligand>
        <name>NAD(+)</name>
        <dbReference type="ChEBI" id="CHEBI:57540"/>
    </ligand>
</feature>
<feature type="binding site" evidence="1">
    <location>
        <position position="153"/>
    </location>
    <ligand>
        <name>NAD(+)</name>
        <dbReference type="ChEBI" id="CHEBI:57540"/>
    </ligand>
</feature>
<feature type="binding site" evidence="1">
    <location>
        <position position="186"/>
    </location>
    <ligand>
        <name>Zn(2+)</name>
        <dbReference type="ChEBI" id="CHEBI:29105"/>
    </ligand>
</feature>
<feature type="binding site" evidence="1">
    <location>
        <position position="249"/>
    </location>
    <ligand>
        <name>Zn(2+)</name>
        <dbReference type="ChEBI" id="CHEBI:29105"/>
    </ligand>
</feature>
<feature type="binding site" evidence="1">
    <location>
        <position position="267"/>
    </location>
    <ligand>
        <name>Zn(2+)</name>
        <dbReference type="ChEBI" id="CHEBI:29105"/>
    </ligand>
</feature>
<sequence length="373" mass="39431">MEQTVHVPLGARAYDVVIGPDLVAQAGQRIAPLLRRKTVAVLTDETVAALHLEALRAGLAADGIEMEALALPPGEATKGWPQFTRAVEWLLDKKVERGDIVIAFGGGVIGDLAGFAAAVLRRGVRFVQIPTSLLAQVDSSVGGKTGINAPQGKNLIGAFHQPSLVLADTAVLGTLTERDFLAGYGEVVKYGLLGDAAFFDWLEENAPAMAAGDMALRVEAVARSVQMKADIVARDETEQGDRALLNLGHTFCHALEAATGYSDRLLHGEGVAIGCALAFELSARLGLCSQEDPSRVRAHLKAMGMKTDLSDIPGDLPPAQELLDLMAQDKKVVDGQLRFILARGIGAAFVTADVPSEKVLEVLQEALAHTQPA</sequence>
<reference key="1">
    <citation type="submission" date="2006-05" db="EMBL/GenBank/DDBJ databases">
        <title>Complete sequence of chromosome of Silicibacter sp. TM1040.</title>
        <authorList>
            <consortium name="US DOE Joint Genome Institute"/>
            <person name="Copeland A."/>
            <person name="Lucas S."/>
            <person name="Lapidus A."/>
            <person name="Barry K."/>
            <person name="Detter J.C."/>
            <person name="Glavina del Rio T."/>
            <person name="Hammon N."/>
            <person name="Israni S."/>
            <person name="Dalin E."/>
            <person name="Tice H."/>
            <person name="Pitluck S."/>
            <person name="Brettin T."/>
            <person name="Bruce D."/>
            <person name="Han C."/>
            <person name="Tapia R."/>
            <person name="Goodwin L."/>
            <person name="Thompson L.S."/>
            <person name="Gilna P."/>
            <person name="Schmutz J."/>
            <person name="Larimer F."/>
            <person name="Land M."/>
            <person name="Hauser L."/>
            <person name="Kyrpides N."/>
            <person name="Kim E."/>
            <person name="Belas R."/>
            <person name="Moran M.A."/>
            <person name="Buchan A."/>
            <person name="Gonzalez J.M."/>
            <person name="Schell M.A."/>
            <person name="Sun F."/>
            <person name="Richardson P."/>
        </authorList>
    </citation>
    <scope>NUCLEOTIDE SEQUENCE [LARGE SCALE GENOMIC DNA]</scope>
    <source>
        <strain>TM1040</strain>
    </source>
</reference>
<organism>
    <name type="scientific">Ruegeria sp. (strain TM1040)</name>
    <name type="common">Silicibacter sp.</name>
    <dbReference type="NCBI Taxonomy" id="292414"/>
    <lineage>
        <taxon>Bacteria</taxon>
        <taxon>Pseudomonadati</taxon>
        <taxon>Pseudomonadota</taxon>
        <taxon>Alphaproteobacteria</taxon>
        <taxon>Rhodobacterales</taxon>
        <taxon>Roseobacteraceae</taxon>
        <taxon>Ruegeria</taxon>
    </lineage>
</organism>
<keyword id="KW-0028">Amino-acid biosynthesis</keyword>
<keyword id="KW-0057">Aromatic amino acid biosynthesis</keyword>
<keyword id="KW-0170">Cobalt</keyword>
<keyword id="KW-0963">Cytoplasm</keyword>
<keyword id="KW-0456">Lyase</keyword>
<keyword id="KW-0479">Metal-binding</keyword>
<keyword id="KW-0520">NAD</keyword>
<keyword id="KW-0547">Nucleotide-binding</keyword>
<keyword id="KW-1185">Reference proteome</keyword>
<keyword id="KW-0862">Zinc</keyword>
<name>AROB_RUEST</name>
<evidence type="ECO:0000255" key="1">
    <source>
        <dbReference type="HAMAP-Rule" id="MF_00110"/>
    </source>
</evidence>
<gene>
    <name evidence="1" type="primary">aroB</name>
    <name type="ordered locus">TM1040_1432</name>
</gene>